<protein>
    <recommendedName>
        <fullName>C-X-C chemokine receptor type 6</fullName>
        <shortName>CXC-R6</shortName>
        <shortName>CXCR-6</shortName>
    </recommendedName>
    <alternativeName>
        <fullName>G-protein coupled receptor bonzo</fullName>
    </alternativeName>
    <cdAntigenName>CD186</cdAntigenName>
</protein>
<dbReference type="EMBL" id="AF007859">
    <property type="protein sequence ID" value="AAB64225.1"/>
    <property type="molecule type" value="Genomic_DNA"/>
</dbReference>
<dbReference type="SMR" id="O18983"/>
<dbReference type="GlyCosmos" id="O18983">
    <property type="glycosylation" value="1 site, No reported glycans"/>
</dbReference>
<dbReference type="GO" id="GO:0009897">
    <property type="term" value="C:external side of plasma membrane"/>
    <property type="evidence" value="ECO:0007669"/>
    <property type="project" value="TreeGrafter"/>
</dbReference>
<dbReference type="GO" id="GO:0019957">
    <property type="term" value="F:C-C chemokine binding"/>
    <property type="evidence" value="ECO:0007669"/>
    <property type="project" value="TreeGrafter"/>
</dbReference>
<dbReference type="GO" id="GO:0016493">
    <property type="term" value="F:C-C chemokine receptor activity"/>
    <property type="evidence" value="ECO:0007669"/>
    <property type="project" value="TreeGrafter"/>
</dbReference>
<dbReference type="GO" id="GO:0016494">
    <property type="term" value="F:C-X-C chemokine receptor activity"/>
    <property type="evidence" value="ECO:0007669"/>
    <property type="project" value="InterPro"/>
</dbReference>
<dbReference type="GO" id="GO:0015026">
    <property type="term" value="F:coreceptor activity"/>
    <property type="evidence" value="ECO:0007669"/>
    <property type="project" value="InterPro"/>
</dbReference>
<dbReference type="GO" id="GO:0019722">
    <property type="term" value="P:calcium-mediated signaling"/>
    <property type="evidence" value="ECO:0007669"/>
    <property type="project" value="TreeGrafter"/>
</dbReference>
<dbReference type="GO" id="GO:0060326">
    <property type="term" value="P:cell chemotaxis"/>
    <property type="evidence" value="ECO:0007669"/>
    <property type="project" value="TreeGrafter"/>
</dbReference>
<dbReference type="GO" id="GO:0006955">
    <property type="term" value="P:immune response"/>
    <property type="evidence" value="ECO:0007669"/>
    <property type="project" value="TreeGrafter"/>
</dbReference>
<dbReference type="GO" id="GO:0006954">
    <property type="term" value="P:inflammatory response"/>
    <property type="evidence" value="ECO:0007669"/>
    <property type="project" value="InterPro"/>
</dbReference>
<dbReference type="GO" id="GO:0007204">
    <property type="term" value="P:positive regulation of cytosolic calcium ion concentration"/>
    <property type="evidence" value="ECO:0007669"/>
    <property type="project" value="TreeGrafter"/>
</dbReference>
<dbReference type="CDD" id="cd15173">
    <property type="entry name" value="7tmA_CXCR6"/>
    <property type="match status" value="1"/>
</dbReference>
<dbReference type="FunFam" id="1.20.1070.10:FF:000035">
    <property type="entry name" value="C-C chemokine receptor type 6"/>
    <property type="match status" value="1"/>
</dbReference>
<dbReference type="Gene3D" id="1.20.1070.10">
    <property type="entry name" value="Rhodopsin 7-helix transmembrane proteins"/>
    <property type="match status" value="1"/>
</dbReference>
<dbReference type="InterPro" id="IPR050119">
    <property type="entry name" value="CCR1-9-like"/>
</dbReference>
<dbReference type="InterPro" id="IPR002235">
    <property type="entry name" value="Chemokine_CXCR6"/>
</dbReference>
<dbReference type="InterPro" id="IPR000355">
    <property type="entry name" value="Chemokine_rcpt"/>
</dbReference>
<dbReference type="InterPro" id="IPR000276">
    <property type="entry name" value="GPCR_Rhodpsn"/>
</dbReference>
<dbReference type="InterPro" id="IPR017452">
    <property type="entry name" value="GPCR_Rhodpsn_7TM"/>
</dbReference>
<dbReference type="PANTHER" id="PTHR10489:SF705">
    <property type="entry name" value="C-X-C CHEMOKINE RECEPTOR TYPE 6"/>
    <property type="match status" value="1"/>
</dbReference>
<dbReference type="PANTHER" id="PTHR10489">
    <property type="entry name" value="CELL ADHESION MOLECULE"/>
    <property type="match status" value="1"/>
</dbReference>
<dbReference type="Pfam" id="PF00001">
    <property type="entry name" value="7tm_1"/>
    <property type="match status" value="1"/>
</dbReference>
<dbReference type="PRINTS" id="PR00657">
    <property type="entry name" value="CCCHEMOKINER"/>
</dbReference>
<dbReference type="PRINTS" id="PR01105">
    <property type="entry name" value="CXCCHMKINER6"/>
</dbReference>
<dbReference type="PRINTS" id="PR00237">
    <property type="entry name" value="GPCRRHODOPSN"/>
</dbReference>
<dbReference type="SUPFAM" id="SSF81321">
    <property type="entry name" value="Family A G protein-coupled receptor-like"/>
    <property type="match status" value="1"/>
</dbReference>
<dbReference type="PROSITE" id="PS00237">
    <property type="entry name" value="G_PROTEIN_RECEP_F1_1"/>
    <property type="match status" value="1"/>
</dbReference>
<dbReference type="PROSITE" id="PS50262">
    <property type="entry name" value="G_PROTEIN_RECEP_F1_2"/>
    <property type="match status" value="1"/>
</dbReference>
<keyword id="KW-1003">Cell membrane</keyword>
<keyword id="KW-1015">Disulfide bond</keyword>
<keyword id="KW-0297">G-protein coupled receptor</keyword>
<keyword id="KW-0325">Glycoprotein</keyword>
<keyword id="KW-0472">Membrane</keyword>
<keyword id="KW-0675">Receptor</keyword>
<keyword id="KW-0807">Transducer</keyword>
<keyword id="KW-0812">Transmembrane</keyword>
<keyword id="KW-1133">Transmembrane helix</keyword>
<evidence type="ECO:0000255" key="1"/>
<evidence type="ECO:0000255" key="2">
    <source>
        <dbReference type="PROSITE-ProRule" id="PRU00521"/>
    </source>
</evidence>
<feature type="chain" id="PRO_0000069363" description="C-X-C chemokine receptor type 6">
    <location>
        <begin position="1"/>
        <end position="342"/>
    </location>
</feature>
<feature type="topological domain" description="Extracellular" evidence="1">
    <location>
        <begin position="1"/>
        <end position="32"/>
    </location>
</feature>
<feature type="transmembrane region" description="Helical; Name=1" evidence="1">
    <location>
        <begin position="33"/>
        <end position="59"/>
    </location>
</feature>
<feature type="topological domain" description="Cytoplasmic" evidence="1">
    <location>
        <begin position="60"/>
        <end position="68"/>
    </location>
</feature>
<feature type="transmembrane region" description="Helical; Name=2" evidence="1">
    <location>
        <begin position="69"/>
        <end position="89"/>
    </location>
</feature>
<feature type="topological domain" description="Extracellular" evidence="1">
    <location>
        <begin position="90"/>
        <end position="103"/>
    </location>
</feature>
<feature type="transmembrane region" description="Helical; Name=3" evidence="1">
    <location>
        <begin position="104"/>
        <end position="125"/>
    </location>
</feature>
<feature type="topological domain" description="Cytoplasmic" evidence="1">
    <location>
        <begin position="126"/>
        <end position="143"/>
    </location>
</feature>
<feature type="transmembrane region" description="Helical; Name=4" evidence="1">
    <location>
        <begin position="144"/>
        <end position="164"/>
    </location>
</feature>
<feature type="topological domain" description="Extracellular" evidence="1">
    <location>
        <begin position="165"/>
        <end position="187"/>
    </location>
</feature>
<feature type="transmembrane region" description="Helical; Name=5" evidence="1">
    <location>
        <begin position="188"/>
        <end position="215"/>
    </location>
</feature>
<feature type="topological domain" description="Cytoplasmic" evidence="1">
    <location>
        <begin position="216"/>
        <end position="231"/>
    </location>
</feature>
<feature type="transmembrane region" description="Helical; Name=6" evidence="1">
    <location>
        <begin position="232"/>
        <end position="259"/>
    </location>
</feature>
<feature type="topological domain" description="Extracellular" evidence="1">
    <location>
        <begin position="260"/>
        <end position="275"/>
    </location>
</feature>
<feature type="transmembrane region" description="Helical; Name=7" evidence="1">
    <location>
        <begin position="276"/>
        <end position="293"/>
    </location>
</feature>
<feature type="topological domain" description="Cytoplasmic" evidence="1">
    <location>
        <begin position="294"/>
        <end position="342"/>
    </location>
</feature>
<feature type="glycosylation site" description="N-linked (GlcNAc...) asparagine" evidence="1">
    <location>
        <position position="16"/>
    </location>
</feature>
<feature type="disulfide bond" evidence="2">
    <location>
        <begin position="102"/>
        <end position="180"/>
    </location>
</feature>
<organism>
    <name type="scientific">Chlorocebus aethiops</name>
    <name type="common">Green monkey</name>
    <name type="synonym">Cercopithecus aethiops</name>
    <dbReference type="NCBI Taxonomy" id="9534"/>
    <lineage>
        <taxon>Eukaryota</taxon>
        <taxon>Metazoa</taxon>
        <taxon>Chordata</taxon>
        <taxon>Craniata</taxon>
        <taxon>Vertebrata</taxon>
        <taxon>Euteleostomi</taxon>
        <taxon>Mammalia</taxon>
        <taxon>Eutheria</taxon>
        <taxon>Euarchontoglires</taxon>
        <taxon>Primates</taxon>
        <taxon>Haplorrhini</taxon>
        <taxon>Catarrhini</taxon>
        <taxon>Cercopithecidae</taxon>
        <taxon>Cercopithecinae</taxon>
        <taxon>Chlorocebus</taxon>
    </lineage>
</organism>
<accession>O18983</accession>
<proteinExistence type="inferred from homology"/>
<name>CXCR6_CHLAE</name>
<sequence length="342" mass="39226">MAEYDHYEDNGFNSFNDSSQEEHQDFLQFSKVFLPCMYLVVFVCGLVGNSLVLVISIFYHKLQSLTDVFLVNLPLADLVFVCTLPFWAYAGIHEWIFGQVMCKTLLGIYTINFYTSMLILTCITVDRFIVVVKATKAYNQQAKKMTWGKVICLLIWVISLLVSLPQIIYGNVFNLDKLICGYHDEEISTVVLATQMTLGFFLPLLAMIVCYSVIIKTLLHAGGFQKHRSLKIIFLVMAVFLLTQTPFNLVKLIRSTHWEYYAMTSFHYTIIVTEAIAYLRACLNPVLYAFVSLKFRKNFWKLVKDIGCLPYLGVSHQWKSSEDNSKTFSASHNVEATSMFQL</sequence>
<reference key="1">
    <citation type="journal article" date="1997" name="Nature">
        <title>Expression cloning of new receptors used by simian and human immunodeficiency viruses.</title>
        <authorList>
            <person name="Deng H.K."/>
            <person name="Unutmaz D."/>
            <person name="Kewalramani V.N."/>
            <person name="Littman D.R."/>
        </authorList>
    </citation>
    <scope>NUCLEOTIDE SEQUENCE [GENOMIC DNA]</scope>
</reference>
<comment type="function">
    <text>Receptor for the C-X-C chemokine CXCL16. Used as a coreceptor by SIVs and by strains of HIV-2 and m-tropic HIV-1.</text>
</comment>
<comment type="subcellular location">
    <subcellularLocation>
        <location>Cell membrane</location>
        <topology>Multi-pass membrane protein</topology>
    </subcellularLocation>
</comment>
<comment type="similarity">
    <text evidence="2">Belongs to the G-protein coupled receptor 1 family.</text>
</comment>
<gene>
    <name type="primary">CXCR6</name>
    <name type="synonym">BONZO</name>
</gene>